<protein>
    <recommendedName>
        <fullName evidence="7">Integrin-binding sialoprotein</fullName>
    </recommendedName>
    <alternativeName>
        <fullName evidence="7">Bone sialoprotein 2</fullName>
    </alternativeName>
    <alternativeName>
        <fullName>Bone sialoprotein II</fullName>
        <shortName>BSP II</shortName>
    </alternativeName>
    <alternativeName>
        <fullName>Cell-binding sialoprotein</fullName>
    </alternativeName>
</protein>
<organism>
    <name type="scientific">Bos taurus</name>
    <name type="common">Bovine</name>
    <dbReference type="NCBI Taxonomy" id="9913"/>
    <lineage>
        <taxon>Eukaryota</taxon>
        <taxon>Metazoa</taxon>
        <taxon>Chordata</taxon>
        <taxon>Craniata</taxon>
        <taxon>Vertebrata</taxon>
        <taxon>Euteleostomi</taxon>
        <taxon>Mammalia</taxon>
        <taxon>Eutheria</taxon>
        <taxon>Laurasiatheria</taxon>
        <taxon>Artiodactyla</taxon>
        <taxon>Ruminantia</taxon>
        <taxon>Pecora</taxon>
        <taxon>Bovidae</taxon>
        <taxon>Bovinae</taxon>
        <taxon>Bos</taxon>
    </lineage>
</organism>
<gene>
    <name type="primary">IBSP</name>
</gene>
<accession>Q28862</accession>
<keyword id="KW-0091">Biomineralization</keyword>
<keyword id="KW-0130">Cell adhesion</keyword>
<keyword id="KW-0903">Direct protein sequencing</keyword>
<keyword id="KW-0325">Glycoprotein</keyword>
<keyword id="KW-0597">Phosphoprotein</keyword>
<keyword id="KW-1185">Reference proteome</keyword>
<keyword id="KW-0964">Secreted</keyword>
<keyword id="KW-0730">Sialic acid</keyword>
<keyword id="KW-0732">Signal</keyword>
<keyword id="KW-0765">Sulfation</keyword>
<proteinExistence type="evidence at protein level"/>
<feature type="signal peptide" evidence="6">
    <location>
        <begin position="1"/>
        <end position="16"/>
    </location>
</feature>
<feature type="chain" id="PRO_0000020329" description="Integrin-binding sialoprotein">
    <location>
        <begin position="17"/>
        <end position="310"/>
    </location>
</feature>
<feature type="region of interest" description="Disordered" evidence="3">
    <location>
        <begin position="61"/>
        <end position="284"/>
    </location>
</feature>
<feature type="short sequence motif" description="Integrin-binding motif" evidence="1">
    <location>
        <begin position="279"/>
        <end position="281"/>
    </location>
</feature>
<feature type="compositionally biased region" description="Low complexity" evidence="3">
    <location>
        <begin position="62"/>
        <end position="74"/>
    </location>
</feature>
<feature type="compositionally biased region" description="Acidic residues" evidence="3">
    <location>
        <begin position="75"/>
        <end position="87"/>
    </location>
</feature>
<feature type="compositionally biased region" description="Acidic residues" evidence="3">
    <location>
        <begin position="96"/>
        <end position="108"/>
    </location>
</feature>
<feature type="compositionally biased region" description="Acidic residues" evidence="3">
    <location>
        <begin position="152"/>
        <end position="174"/>
    </location>
</feature>
<feature type="compositionally biased region" description="Polar residues" evidence="3">
    <location>
        <begin position="175"/>
        <end position="187"/>
    </location>
</feature>
<feature type="compositionally biased region" description="Acidic residues" evidence="3">
    <location>
        <begin position="198"/>
        <end position="208"/>
    </location>
</feature>
<feature type="compositionally biased region" description="Polar residues" evidence="3">
    <location>
        <begin position="209"/>
        <end position="227"/>
    </location>
</feature>
<feature type="modified residue" description="Phosphoserine" evidence="4">
    <location>
        <position position="31"/>
    </location>
</feature>
<feature type="modified residue" description="Phosphoserine" evidence="4">
    <location>
        <position position="62"/>
    </location>
</feature>
<feature type="modified residue" description="Phosphoserine" evidence="4">
    <location>
        <position position="67"/>
    </location>
</feature>
<feature type="modified residue" description="Phosphoserine" evidence="4">
    <location>
        <position position="75"/>
    </location>
</feature>
<feature type="modified residue" description="Phosphoserine" evidence="4">
    <location>
        <position position="76"/>
    </location>
</feature>
<feature type="modified residue" description="Phosphoserine" evidence="4">
    <location>
        <position position="98"/>
    </location>
</feature>
<feature type="modified residue" description="Phosphoserine" evidence="4">
    <location>
        <position position="106"/>
    </location>
</feature>
<feature type="modified residue" description="Phosphothreonine" evidence="4">
    <location>
        <position position="144"/>
    </location>
</feature>
<feature type="modified residue" description="Phosphoserine" evidence="4">
    <location>
        <position position="154"/>
    </location>
</feature>
<feature type="modified residue" description="Phosphoserine" evidence="4">
    <location>
        <position position="273"/>
    </location>
</feature>
<feature type="modified residue" description="Phosphoserine" evidence="4">
    <location>
        <position position="300"/>
    </location>
</feature>
<feature type="modified residue" description="Sulfotyrosine" evidence="1">
    <location>
        <position position="306"/>
    </location>
</feature>
<feature type="modified residue" description="Sulfotyrosine" evidence="1">
    <location>
        <position position="307"/>
    </location>
</feature>
<feature type="glycosylation site" description="N-linked (GlcNAc...) asparagine" evidence="2">
    <location>
        <position position="110"/>
    </location>
</feature>
<feature type="glycosylation site" description="N-linked (GlcNAc...) asparagine" evidence="2">
    <location>
        <position position="178"/>
    </location>
</feature>
<feature type="glycosylation site" description="N-linked (GlcNAc...) asparagine" evidence="2">
    <location>
        <position position="183"/>
    </location>
</feature>
<name>SIAL_BOVIN</name>
<dbReference type="EMBL" id="S73144">
    <property type="protein sequence ID" value="AAB30817.1"/>
    <property type="molecule type" value="mRNA"/>
</dbReference>
<dbReference type="PIR" id="I46987">
    <property type="entry name" value="I46987"/>
</dbReference>
<dbReference type="RefSeq" id="NP_776509.1">
    <property type="nucleotide sequence ID" value="NM_174084.3"/>
</dbReference>
<dbReference type="RefSeq" id="XP_010804306.1">
    <property type="nucleotide sequence ID" value="XM_010806004.3"/>
</dbReference>
<dbReference type="SMR" id="Q28862"/>
<dbReference type="FunCoup" id="Q28862">
    <property type="interactions" value="159"/>
</dbReference>
<dbReference type="STRING" id="9913.ENSBTAP00000000595"/>
<dbReference type="GlyCosmos" id="Q28862">
    <property type="glycosylation" value="3 sites, No reported glycans"/>
</dbReference>
<dbReference type="GlyGen" id="Q28862">
    <property type="glycosylation" value="3 sites"/>
</dbReference>
<dbReference type="iPTMnet" id="Q28862"/>
<dbReference type="PaxDb" id="9913-ENSBTAP00000000595"/>
<dbReference type="Ensembl" id="ENSBTAT00000000595.3">
    <property type="protein sequence ID" value="ENSBTAP00000000595.2"/>
    <property type="gene ID" value="ENSBTAG00000000470.4"/>
</dbReference>
<dbReference type="GeneID" id="281233"/>
<dbReference type="KEGG" id="bta:281233"/>
<dbReference type="CTD" id="3381"/>
<dbReference type="VEuPathDB" id="HostDB:ENSBTAG00000000470"/>
<dbReference type="VGNC" id="VGNC:30021">
    <property type="gene designation" value="IBSP"/>
</dbReference>
<dbReference type="eggNOG" id="KOG1181">
    <property type="taxonomic scope" value="Eukaryota"/>
</dbReference>
<dbReference type="GeneTree" id="ENSGT00390000002485"/>
<dbReference type="HOGENOM" id="CLU_076119_0_0_1"/>
<dbReference type="InParanoid" id="Q28862"/>
<dbReference type="OMA" id="HAYFYPH"/>
<dbReference type="OrthoDB" id="9909090at2759"/>
<dbReference type="TreeFam" id="TF338678"/>
<dbReference type="Reactome" id="R-BTA-216083">
    <property type="pathway name" value="Integrin cell surface interactions"/>
</dbReference>
<dbReference type="Proteomes" id="UP000009136">
    <property type="component" value="Chromosome 6"/>
</dbReference>
<dbReference type="Bgee" id="ENSBTAG00000000470">
    <property type="expression patterns" value="Expressed in diaphragm and 19 other cell types or tissues"/>
</dbReference>
<dbReference type="GO" id="GO:0005615">
    <property type="term" value="C:extracellular space"/>
    <property type="evidence" value="ECO:0000250"/>
    <property type="project" value="UniProtKB"/>
</dbReference>
<dbReference type="GO" id="GO:0031982">
    <property type="term" value="C:vesicle"/>
    <property type="evidence" value="ECO:0000250"/>
    <property type="project" value="UniProtKB"/>
</dbReference>
<dbReference type="GO" id="GO:0030282">
    <property type="term" value="P:bone mineralization"/>
    <property type="evidence" value="ECO:0000270"/>
    <property type="project" value="UniProtKB"/>
</dbReference>
<dbReference type="GO" id="GO:0007155">
    <property type="term" value="P:cell adhesion"/>
    <property type="evidence" value="ECO:0000250"/>
    <property type="project" value="UniProtKB"/>
</dbReference>
<dbReference type="GO" id="GO:0071363">
    <property type="term" value="P:cellular response to growth factor stimulus"/>
    <property type="evidence" value="ECO:0000250"/>
    <property type="project" value="UniProtKB"/>
</dbReference>
<dbReference type="GO" id="GO:0030198">
    <property type="term" value="P:extracellular matrix organization"/>
    <property type="evidence" value="ECO:0000250"/>
    <property type="project" value="UniProtKB"/>
</dbReference>
<dbReference type="InterPro" id="IPR008412">
    <property type="entry name" value="IBSP"/>
</dbReference>
<dbReference type="PANTHER" id="PTHR10345">
    <property type="entry name" value="BONE SIALOPROTEIN 2"/>
    <property type="match status" value="1"/>
</dbReference>
<dbReference type="PANTHER" id="PTHR10345:SF0">
    <property type="entry name" value="BONE SIALOPROTEIN 2"/>
    <property type="match status" value="1"/>
</dbReference>
<dbReference type="Pfam" id="PF05432">
    <property type="entry name" value="BSP_II"/>
    <property type="match status" value="1"/>
</dbReference>
<comment type="function">
    <text evidence="1">Binds tightly to hydroxyapatite. Appears to form an integral part of the mineralized matrix. Probably important to cell-matrix interaction. Promotes adhesion and migration of various cells via the alpha-V/beta-3 integrin receptor (ITGAV:ITGB3).</text>
</comment>
<comment type="subunit">
    <text evidence="1 5">Monomer (By similarity). Interacts with integrins; the interaction promotes cell adhesion (PubMed:2461939).</text>
</comment>
<comment type="subcellular location">
    <subcellularLocation>
        <location evidence="1">Secreted</location>
    </subcellularLocation>
</comment>
<comment type="domain">
    <text evidence="1">The Arg-Gly-Asp (RGD) sequence serves as an integrin-binding motif and is required for integrin-mediated cell attachment.</text>
</comment>
<comment type="miscellaneous">
    <text>It is possible that the segments of clustered carboxyl groups mediate the strong binding to hydroxyapatite.</text>
</comment>
<reference key="1">
    <citation type="journal article" date="1994" name="J. Bone Miner. Res.">
        <title>Cloning and sequence analysis of bovine bone sialoprotein cDNA: conservation of acidic domains, tyrosine sulfation consensus repeats, and RGD cell attachment domain.</title>
        <authorList>
            <person name="Chenu C."/>
            <person name="Ibaraki K."/>
            <person name="Gehron Robey P."/>
            <person name="Delmas P.D."/>
            <person name="Young M.F."/>
        </authorList>
    </citation>
    <scope>NUCLEOTIDE SEQUENCE [MRNA]</scope>
    <source>
        <tissue>Bone</tissue>
    </source>
</reference>
<reference key="2">
    <citation type="journal article" date="1996" name="J. Biol. Chem.">
        <title>Phosphorylation of purified bovine bone sialoprotein and osteopontin by protein kinases.</title>
        <authorList>
            <person name="Salih E."/>
            <person name="Zhou H.-Y."/>
            <person name="Glimcher M.J."/>
        </authorList>
    </citation>
    <scope>PROTEIN SEQUENCE OF 17-27 AND 140-148</scope>
    <scope>PHOSPHORYLATION</scope>
</reference>
<reference key="3">
    <citation type="journal article" date="2004" name="J. Biol. Chem.">
        <title>Complete topographical distribution of both the in vivo and in vitro phosphorylation sites of bone sialprotein and their biological implications.</title>
        <authorList>
            <person name="Salih E."/>
            <person name="Flueckiger R."/>
        </authorList>
    </citation>
    <scope>PARTIAL PROTEIN SEQUENCE</scope>
    <scope>PHOSPHORYLATION AT SER-31; SER-62; SER-67; SER-75; SER-76; SER-98; SER-106; THR-144; SER-154; SER-273 AND SER-300</scope>
    <scope>IDENTIFICATION BY MASS SPECTROMETRY</scope>
</reference>
<reference key="4">
    <citation type="journal article" date="1988" name="J. Biol. Chem.">
        <title>Identification of a bone sialoprotein receptor in osteosarcoma cells.</title>
        <authorList>
            <person name="Oldberg A."/>
            <person name="Franzen A."/>
            <person name="Heinegaard D."/>
            <person name="Pierschbacher M."/>
            <person name="Ruoslahti E."/>
        </authorList>
    </citation>
    <scope>INTERACTION WITH INTEGRINS</scope>
</reference>
<evidence type="ECO:0000250" key="1">
    <source>
        <dbReference type="UniProtKB" id="P21815"/>
    </source>
</evidence>
<evidence type="ECO:0000255" key="2"/>
<evidence type="ECO:0000256" key="3">
    <source>
        <dbReference type="SAM" id="MobiDB-lite"/>
    </source>
</evidence>
<evidence type="ECO:0000269" key="4">
    <source>
    </source>
</evidence>
<evidence type="ECO:0000269" key="5">
    <source>
    </source>
</evidence>
<evidence type="ECO:0000269" key="6">
    <source>
    </source>
</evidence>
<evidence type="ECO:0000305" key="7"/>
<sequence>MKTVLILLSILGMACALSMKNLNRRAKLEDSEENGVFKYRPQYYVYKHGYFYPALKRFAVQSSSDSSEENGNGDSSEEEEEEEETSNEEGNNGGNEDSDENEDEESEAENTTLSTTTLGYGEITPGTGDIGLAAIWLPRKAGATGKKATKEDESDEEEEEEEEEENEAEVDDNEQGINGTSSNSTEVDNGHGSSGGDNGEEDGEEESVTEANTEGITVAGETTTSPNGGFKPTTPHQEVYGTTPPPFGKITTPGEYEQTGTNEYDNGYEIYESENGDPRGDNYRAYEDEYSYYKGRGYDSYDGQDYYSHQ</sequence>